<name>SRF_CAEEL</name>
<gene>
    <name evidence="9" type="primary">unc-120</name>
    <name evidence="9" type="ORF">D1081.2</name>
</gene>
<evidence type="ECO:0000250" key="1">
    <source>
        <dbReference type="UniProtKB" id="Q9JM73"/>
    </source>
</evidence>
<evidence type="ECO:0000255" key="2">
    <source>
        <dbReference type="PROSITE-ProRule" id="PRU00251"/>
    </source>
</evidence>
<evidence type="ECO:0000256" key="3">
    <source>
        <dbReference type="SAM" id="MobiDB-lite"/>
    </source>
</evidence>
<evidence type="ECO:0000269" key="4">
    <source>
    </source>
</evidence>
<evidence type="ECO:0000269" key="5">
    <source>
    </source>
</evidence>
<evidence type="ECO:0000269" key="6">
    <source>
    </source>
</evidence>
<evidence type="ECO:0000305" key="7"/>
<evidence type="ECO:0000312" key="8">
    <source>
        <dbReference type="Proteomes" id="UP000001940"/>
    </source>
</evidence>
<evidence type="ECO:0000312" key="9">
    <source>
        <dbReference type="WormBase" id="D1081.2"/>
    </source>
</evidence>
<accession>Q18955</accession>
<organism evidence="8">
    <name type="scientific">Caenorhabditis elegans</name>
    <dbReference type="NCBI Taxonomy" id="6239"/>
    <lineage>
        <taxon>Eukaryota</taxon>
        <taxon>Metazoa</taxon>
        <taxon>Ecdysozoa</taxon>
        <taxon>Nematoda</taxon>
        <taxon>Chromadorea</taxon>
        <taxon>Rhabditida</taxon>
        <taxon>Rhabditina</taxon>
        <taxon>Rhabditomorpha</taxon>
        <taxon>Rhabditoidea</taxon>
        <taxon>Rhabditidae</taxon>
        <taxon>Peloderinae</taxon>
        <taxon>Caenorhabditis</taxon>
    </lineage>
</organism>
<protein>
    <recommendedName>
        <fullName evidence="7">Serum response factor homolog</fullName>
    </recommendedName>
    <alternativeName>
        <fullName evidence="9">Uncoordinated protein 120</fullName>
    </alternativeName>
</protein>
<dbReference type="EMBL" id="BX284601">
    <property type="protein sequence ID" value="CAB00023.1"/>
    <property type="molecule type" value="Genomic_DNA"/>
</dbReference>
<dbReference type="PIR" id="T20313">
    <property type="entry name" value="T20313"/>
</dbReference>
<dbReference type="RefSeq" id="NP_492296.1">
    <property type="nucleotide sequence ID" value="NM_059895.5"/>
</dbReference>
<dbReference type="SMR" id="Q18955"/>
<dbReference type="DIP" id="DIP-26080N"/>
<dbReference type="FunCoup" id="Q18955">
    <property type="interactions" value="108"/>
</dbReference>
<dbReference type="STRING" id="6239.D1081.2.1"/>
<dbReference type="PaxDb" id="6239-D1081.2"/>
<dbReference type="PeptideAtlas" id="Q18955"/>
<dbReference type="EnsemblMetazoa" id="D1081.2.1">
    <property type="protein sequence ID" value="D1081.2.1"/>
    <property type="gene ID" value="WBGene00006844"/>
</dbReference>
<dbReference type="GeneID" id="172636"/>
<dbReference type="KEGG" id="cel:CELE_D1081.2"/>
<dbReference type="UCSC" id="D1081.2">
    <property type="organism name" value="c. elegans"/>
</dbReference>
<dbReference type="AGR" id="WB:WBGene00006844"/>
<dbReference type="CTD" id="172636"/>
<dbReference type="WormBase" id="D1081.2">
    <property type="protein sequence ID" value="CE05534"/>
    <property type="gene ID" value="WBGene00006844"/>
    <property type="gene designation" value="unc-120"/>
</dbReference>
<dbReference type="eggNOG" id="KOG0015">
    <property type="taxonomic scope" value="Eukaryota"/>
</dbReference>
<dbReference type="GeneTree" id="ENSGT00400000022158"/>
<dbReference type="HOGENOM" id="CLU_869421_0_0_1"/>
<dbReference type="InParanoid" id="Q18955"/>
<dbReference type="OMA" id="KMEYISN"/>
<dbReference type="OrthoDB" id="2284405at2759"/>
<dbReference type="Reactome" id="R-CEL-9031628">
    <property type="pathway name" value="NGF-stimulated transcription"/>
</dbReference>
<dbReference type="SignaLink" id="Q18955"/>
<dbReference type="PRO" id="PR:Q18955"/>
<dbReference type="Proteomes" id="UP000001940">
    <property type="component" value="Chromosome I"/>
</dbReference>
<dbReference type="Bgee" id="WBGene00006844">
    <property type="expression patterns" value="Expressed in pharyngeal muscle cell (C elegans) and 3 other cell types or tissues"/>
</dbReference>
<dbReference type="GO" id="GO:0005634">
    <property type="term" value="C:nucleus"/>
    <property type="evidence" value="ECO:0000314"/>
    <property type="project" value="WormBase"/>
</dbReference>
<dbReference type="GO" id="GO:0000981">
    <property type="term" value="F:DNA-binding transcription factor activity, RNA polymerase II-specific"/>
    <property type="evidence" value="ECO:0000318"/>
    <property type="project" value="GO_Central"/>
</dbReference>
<dbReference type="GO" id="GO:0046983">
    <property type="term" value="F:protein dimerization activity"/>
    <property type="evidence" value="ECO:0007669"/>
    <property type="project" value="InterPro"/>
</dbReference>
<dbReference type="GO" id="GO:0000978">
    <property type="term" value="F:RNA polymerase II cis-regulatory region sequence-specific DNA binding"/>
    <property type="evidence" value="ECO:0000318"/>
    <property type="project" value="GO_Central"/>
</dbReference>
<dbReference type="GO" id="GO:0007517">
    <property type="term" value="P:muscle organ development"/>
    <property type="evidence" value="ECO:0007669"/>
    <property type="project" value="UniProtKB-KW"/>
</dbReference>
<dbReference type="GO" id="GO:0051149">
    <property type="term" value="P:positive regulation of muscle cell differentiation"/>
    <property type="evidence" value="ECO:0000315"/>
    <property type="project" value="UniProtKB"/>
</dbReference>
<dbReference type="GO" id="GO:0045944">
    <property type="term" value="P:positive regulation of transcription by RNA polymerase II"/>
    <property type="evidence" value="ECO:0000318"/>
    <property type="project" value="GO_Central"/>
</dbReference>
<dbReference type="CDD" id="cd00266">
    <property type="entry name" value="MADS_SRF_like"/>
    <property type="match status" value="1"/>
</dbReference>
<dbReference type="FunFam" id="3.40.1810.10:FF:000002">
    <property type="entry name" value="Serum response factor b"/>
    <property type="match status" value="1"/>
</dbReference>
<dbReference type="Gene3D" id="3.40.1810.10">
    <property type="entry name" value="Transcription factor, MADS-box"/>
    <property type="match status" value="1"/>
</dbReference>
<dbReference type="InterPro" id="IPR050142">
    <property type="entry name" value="MADS-box/MEF2_TF"/>
</dbReference>
<dbReference type="InterPro" id="IPR033897">
    <property type="entry name" value="SRF-like_MADS-box"/>
</dbReference>
<dbReference type="InterPro" id="IPR002100">
    <property type="entry name" value="TF_MADSbox"/>
</dbReference>
<dbReference type="InterPro" id="IPR036879">
    <property type="entry name" value="TF_MADSbox_sf"/>
</dbReference>
<dbReference type="PANTHER" id="PTHR48019">
    <property type="entry name" value="SERUM RESPONSE FACTOR HOMOLOG"/>
    <property type="match status" value="1"/>
</dbReference>
<dbReference type="Pfam" id="PF00319">
    <property type="entry name" value="SRF-TF"/>
    <property type="match status" value="1"/>
</dbReference>
<dbReference type="PRINTS" id="PR00404">
    <property type="entry name" value="MADSDOMAIN"/>
</dbReference>
<dbReference type="SMART" id="SM00432">
    <property type="entry name" value="MADS"/>
    <property type="match status" value="1"/>
</dbReference>
<dbReference type="SUPFAM" id="SSF55455">
    <property type="entry name" value="SRF-like"/>
    <property type="match status" value="1"/>
</dbReference>
<dbReference type="PROSITE" id="PS00350">
    <property type="entry name" value="MADS_BOX_1"/>
    <property type="match status" value="1"/>
</dbReference>
<dbReference type="PROSITE" id="PS50066">
    <property type="entry name" value="MADS_BOX_2"/>
    <property type="match status" value="1"/>
</dbReference>
<comment type="function">
    <text evidence="1 4 5 6">Transcription factor (By similarity). Regulates myogenesis, in cooperation with transcription factors hlh-1 and hnd-1 (PubMed:15892873, PubMed:17142668). Required for maintenance of muscle in adulthood (PubMed:29314608).</text>
</comment>
<comment type="subcellular location">
    <subcellularLocation>
        <location evidence="2 6">Nucleus</location>
    </subcellularLocation>
</comment>
<comment type="tissue specificity">
    <text evidence="5">Expressed in muscle, varying with age, decreasing twofold during the first week of adulthood.</text>
</comment>
<comment type="disruption phenotype">
    <text evidence="4 5 6">Mutants usually hatch and appear normal in early L1, but become progressively paralyzed later during L1 (PubMed:17142668). Complete larval lethal, typically at late L1 or early L2 (PubMed:17142668). Abnormal bodywall and egg-laying muscle in hermaphrodites, but with no obvious abnormality of pharyngeal muscle or other cell types (PubMed:17142668). Five percent of the progeny from hlh-1, unc-120 double heterozygous parents exhibit partial absence of bodywall muscle and reduced expression of myosin myo-3 (PubMed:17142668). RNAi-mediated knockdown causes a low frequency of embryonic lethality, with embryos arresting paralyzed at the two-fold stage; increases in frequency significantly on an hlh-1 or hnd-1 mutant background (PubMed:15892873). RNAi-mediated knockdown causes those embryos that survive to hatching to become uncoordinated, dumpy larvae (PubMed:15892873). RNAi-mediated knockdown causes abnormalities in muscle, including: altered mitochondrial morphology at day 6 of adulthood, two-fold to five-fold down-regulation of transcript levels at day 7 and significant increase in the number of autophagic vesicles (PubMed:29314608). RNAi-mediated knockdown causes a reduction in average lifespan by 16% (PubMed:29314608). RNAi-mediated knockdown on a daf-2 mutant background causes a dramatic decrease in physical performance at day 18 (PubMed:29314608).</text>
</comment>
<sequence>MTEAEDFAQLLQKLQNASPALPEGTSSTPTPSSSTGLLPNGKKTKGRVKIKMEYINNKLRRYTTFSKRKTGIMKKAFELSTLTGTQVMLLVASETGHVYTYATPKLQPMISSDTGKAMIQSCLNAPGGDGSDVQPSRTEFTFDSGNGGNGMRKRKMLSDVMSAESSNNSPSMPNFTPFLAPSMAPLFSTFGEDDYNNDESGDDSDSEEASSDIKEEYQGSPTMVKQETTEIDSVTASLQQRIKEAMRQAASNKQAIKKAKITPPSSNMNNAAFLNPFLLQGGANASNLLATAARKGDDAGSLTSNPFLSMGLNLQQLIESAAIASNE</sequence>
<feature type="chain" id="PRO_0000451823" description="Serum response factor homolog">
    <location>
        <begin position="1"/>
        <end position="327"/>
    </location>
</feature>
<feature type="domain" description="MADS-box" evidence="2">
    <location>
        <begin position="45"/>
        <end position="105"/>
    </location>
</feature>
<feature type="region of interest" description="Disordered" evidence="3">
    <location>
        <begin position="12"/>
        <end position="43"/>
    </location>
</feature>
<feature type="region of interest" description="Disordered" evidence="3">
    <location>
        <begin position="189"/>
        <end position="225"/>
    </location>
</feature>
<feature type="compositionally biased region" description="Low complexity" evidence="3">
    <location>
        <begin position="25"/>
        <end position="35"/>
    </location>
</feature>
<feature type="compositionally biased region" description="Acidic residues" evidence="3">
    <location>
        <begin position="191"/>
        <end position="210"/>
    </location>
</feature>
<reference evidence="8" key="1">
    <citation type="journal article" date="1998" name="Science">
        <title>Genome sequence of the nematode C. elegans: a platform for investigating biology.</title>
        <authorList>
            <consortium name="The C. elegans sequencing consortium"/>
        </authorList>
    </citation>
    <scope>NUCLEOTIDE SEQUENCE [LARGE SCALE GENOMIC DNA]</scope>
    <source>
        <strain evidence="8">Bristol N2</strain>
    </source>
</reference>
<reference evidence="7" key="2">
    <citation type="journal article" date="2005" name="Genome Biol.">
        <title>Synthetic lethal analysis of Caenorhabditis elegans posterior embryonic patterning genes identifies conserved genetic interactions.</title>
        <authorList>
            <person name="Baugh L.R."/>
            <person name="Wen J.C."/>
            <person name="Hill A.A."/>
            <person name="Slonim D.K."/>
            <person name="Brown E.L."/>
            <person name="Hunter C.P."/>
        </authorList>
    </citation>
    <scope>FUNCTION</scope>
    <scope>DISRUPTION PHENOTYPE</scope>
</reference>
<reference evidence="7" key="3">
    <citation type="journal article" date="2006" name="Genes Dev.">
        <title>Defining the transcriptional redundancy of early bodywall muscle development in C. elegans: evidence for a unified theory of animal muscle development.</title>
        <authorList>
            <person name="Fukushige T."/>
            <person name="Brodigan T.M."/>
            <person name="Schriefer L.A."/>
            <person name="Waterston R.H."/>
            <person name="Krause M."/>
        </authorList>
    </citation>
    <scope>FUNCTION</scope>
    <scope>TISSUE SPECIFICITY</scope>
    <scope>DISRUPTION PHENOTYPE</scope>
</reference>
<reference evidence="7" key="4">
    <citation type="journal article" date="2018" name="Aging Cell">
        <title>UNC-120/SRF independently controls muscle aging and lifespan in Caenorhabditis elegans.</title>
        <authorList>
            <person name="Mergoud Dit Lamarche A."/>
            <person name="Molin L."/>
            <person name="Pierson L."/>
            <person name="Mariol M.C."/>
            <person name="Bessereau J.L."/>
            <person name="Gieseler K."/>
            <person name="Solari F."/>
        </authorList>
    </citation>
    <scope>FUNCTION</scope>
    <scope>SUBCELLULAR LOCATION</scope>
    <scope>DISRUPTION PHENOTYPE</scope>
</reference>
<proteinExistence type="evidence at transcript level"/>
<keyword id="KW-0217">Developmental protein</keyword>
<keyword id="KW-0238">DNA-binding</keyword>
<keyword id="KW-0517">Myogenesis</keyword>
<keyword id="KW-0539">Nucleus</keyword>
<keyword id="KW-1185">Reference proteome</keyword>
<keyword id="KW-0804">Transcription</keyword>
<keyword id="KW-0805">Transcription regulation</keyword>